<keyword id="KW-0067">ATP-binding</keyword>
<keyword id="KW-0963">Cytoplasm</keyword>
<keyword id="KW-0436">Ligase</keyword>
<keyword id="KW-0460">Magnesium</keyword>
<keyword id="KW-0479">Metal-binding</keyword>
<keyword id="KW-0547">Nucleotide-binding</keyword>
<keyword id="KW-0658">Purine biosynthesis</keyword>
<organism>
    <name type="scientific">Bacillus cytotoxicus (strain DSM 22905 / CIP 110041 / 391-98 / NVH 391-98)</name>
    <dbReference type="NCBI Taxonomy" id="315749"/>
    <lineage>
        <taxon>Bacteria</taxon>
        <taxon>Bacillati</taxon>
        <taxon>Bacillota</taxon>
        <taxon>Bacilli</taxon>
        <taxon>Bacillales</taxon>
        <taxon>Bacillaceae</taxon>
        <taxon>Bacillus</taxon>
        <taxon>Bacillus cereus group</taxon>
    </lineage>
</organism>
<dbReference type="EC" id="6.3.5.3" evidence="1"/>
<dbReference type="EMBL" id="CP000764">
    <property type="protein sequence ID" value="ABS20636.1"/>
    <property type="molecule type" value="Genomic_DNA"/>
</dbReference>
<dbReference type="RefSeq" id="WP_011983395.1">
    <property type="nucleotide sequence ID" value="NC_009674.1"/>
</dbReference>
<dbReference type="SMR" id="A7GKH8"/>
<dbReference type="STRING" id="315749.Bcer98_0273"/>
<dbReference type="GeneID" id="33895628"/>
<dbReference type="KEGG" id="bcy:Bcer98_0273"/>
<dbReference type="eggNOG" id="COG0046">
    <property type="taxonomic scope" value="Bacteria"/>
</dbReference>
<dbReference type="HOGENOM" id="CLU_003100_0_1_9"/>
<dbReference type="OrthoDB" id="9804441at2"/>
<dbReference type="UniPathway" id="UPA00074">
    <property type="reaction ID" value="UER00128"/>
</dbReference>
<dbReference type="Proteomes" id="UP000002300">
    <property type="component" value="Chromosome"/>
</dbReference>
<dbReference type="GO" id="GO:0005737">
    <property type="term" value="C:cytoplasm"/>
    <property type="evidence" value="ECO:0007669"/>
    <property type="project" value="UniProtKB-SubCell"/>
</dbReference>
<dbReference type="GO" id="GO:0005524">
    <property type="term" value="F:ATP binding"/>
    <property type="evidence" value="ECO:0007669"/>
    <property type="project" value="UniProtKB-UniRule"/>
</dbReference>
<dbReference type="GO" id="GO:0000287">
    <property type="term" value="F:magnesium ion binding"/>
    <property type="evidence" value="ECO:0007669"/>
    <property type="project" value="UniProtKB-UniRule"/>
</dbReference>
<dbReference type="GO" id="GO:0004642">
    <property type="term" value="F:phosphoribosylformylglycinamidine synthase activity"/>
    <property type="evidence" value="ECO:0007669"/>
    <property type="project" value="UniProtKB-UniRule"/>
</dbReference>
<dbReference type="GO" id="GO:0006189">
    <property type="term" value="P:'de novo' IMP biosynthetic process"/>
    <property type="evidence" value="ECO:0007669"/>
    <property type="project" value="UniProtKB-UniRule"/>
</dbReference>
<dbReference type="CDD" id="cd02203">
    <property type="entry name" value="PurL_repeat1"/>
    <property type="match status" value="1"/>
</dbReference>
<dbReference type="CDD" id="cd02204">
    <property type="entry name" value="PurL_repeat2"/>
    <property type="match status" value="1"/>
</dbReference>
<dbReference type="FunFam" id="3.30.1330.10:FF:000004">
    <property type="entry name" value="Phosphoribosylformylglycinamidine synthase subunit PurL"/>
    <property type="match status" value="1"/>
</dbReference>
<dbReference type="FunFam" id="3.30.1330.10:FF:000011">
    <property type="entry name" value="Phosphoribosylformylglycinamidine synthase subunit PurL"/>
    <property type="match status" value="1"/>
</dbReference>
<dbReference type="FunFam" id="3.90.650.10:FF:000009">
    <property type="entry name" value="Phosphoribosylformylglycinamidine synthase subunit PurL"/>
    <property type="match status" value="1"/>
</dbReference>
<dbReference type="FunFam" id="3.90.650.10:FF:000013">
    <property type="entry name" value="Phosphoribosylformylglycinamidine synthase subunit PurL"/>
    <property type="match status" value="1"/>
</dbReference>
<dbReference type="Gene3D" id="3.90.650.10">
    <property type="entry name" value="PurM-like C-terminal domain"/>
    <property type="match status" value="2"/>
</dbReference>
<dbReference type="Gene3D" id="3.30.1330.10">
    <property type="entry name" value="PurM-like, N-terminal domain"/>
    <property type="match status" value="2"/>
</dbReference>
<dbReference type="HAMAP" id="MF_00420">
    <property type="entry name" value="PurL_2"/>
    <property type="match status" value="1"/>
</dbReference>
<dbReference type="InterPro" id="IPR010074">
    <property type="entry name" value="PRibForGlyAmidine_synth_PurL"/>
</dbReference>
<dbReference type="InterPro" id="IPR041609">
    <property type="entry name" value="PurL_linker"/>
</dbReference>
<dbReference type="InterPro" id="IPR010918">
    <property type="entry name" value="PurM-like_C_dom"/>
</dbReference>
<dbReference type="InterPro" id="IPR036676">
    <property type="entry name" value="PurM-like_C_sf"/>
</dbReference>
<dbReference type="InterPro" id="IPR016188">
    <property type="entry name" value="PurM-like_N"/>
</dbReference>
<dbReference type="InterPro" id="IPR036921">
    <property type="entry name" value="PurM-like_N_sf"/>
</dbReference>
<dbReference type="NCBIfam" id="TIGR01736">
    <property type="entry name" value="FGAM_synth_II"/>
    <property type="match status" value="1"/>
</dbReference>
<dbReference type="NCBIfam" id="NF002290">
    <property type="entry name" value="PRK01213.1"/>
    <property type="match status" value="1"/>
</dbReference>
<dbReference type="PANTHER" id="PTHR43555">
    <property type="entry name" value="PHOSPHORIBOSYLFORMYLGLYCINAMIDINE SYNTHASE SUBUNIT PURL"/>
    <property type="match status" value="1"/>
</dbReference>
<dbReference type="PANTHER" id="PTHR43555:SF1">
    <property type="entry name" value="PHOSPHORIBOSYLFORMYLGLYCINAMIDINE SYNTHASE SUBUNIT PURL"/>
    <property type="match status" value="1"/>
</dbReference>
<dbReference type="Pfam" id="PF00586">
    <property type="entry name" value="AIRS"/>
    <property type="match status" value="2"/>
</dbReference>
<dbReference type="Pfam" id="PF02769">
    <property type="entry name" value="AIRS_C"/>
    <property type="match status" value="2"/>
</dbReference>
<dbReference type="Pfam" id="PF18072">
    <property type="entry name" value="FGAR-AT_linker"/>
    <property type="match status" value="1"/>
</dbReference>
<dbReference type="PIRSF" id="PIRSF001587">
    <property type="entry name" value="FGAM_synthase_II"/>
    <property type="match status" value="1"/>
</dbReference>
<dbReference type="SUPFAM" id="SSF56042">
    <property type="entry name" value="PurM C-terminal domain-like"/>
    <property type="match status" value="2"/>
</dbReference>
<dbReference type="SUPFAM" id="SSF55326">
    <property type="entry name" value="PurM N-terminal domain-like"/>
    <property type="match status" value="2"/>
</dbReference>
<sequence>MSLMLEPNPTQIKEERIYAEMGLTDEEFAMIEKILGRLPNYTETGLFSVMWSEHCSYKNSKPVLRKFPTTGERVLQGPGEGAGIVDIGDNQAVVFKMESHNHPSAIEPYQGAATGVGGIIRDIFSMGARPVALLNSLRFGELQSPRVKYLFEEVVAGIAGYGNCIGIPTVGGEVQFDPCYEGNPLVNAMCVGLIHHEDIKKGQAHGAGNTVMYVGASTGRDGIHGATFASEELSESSEAKRPAVQVGDPFMEKLLIEACLELIQSDALVGIQDMGAAGLTSSSAEMASKAGMGIEMYLDDVPQRETGMTPYEMMLSESQERMLIVVKKGREQEVVELFEKYGLAAVAMGKVTEDKMLRLFHKGEMVAEVPADALAEEAPIYHKPSKEAAYFREFQEMKMKTPKVDNYKETLLALLQQPTIASKEWVYDQYDYQVRTSTVVTPGSDAAVVRVRGTEKALAITTDCNSRYIYLDPETGGKIAVAEAARNIVCSGGEPLAITDCLNFGNPEKPEIFWQIEKSVDGMSEACRTLQTPVIGGNVSMYNERSGEAVYPTPTVGMVGLVHDLKHVTTQEFKQAGDLIYVMGETKAEFGGSELQKMMYGKIFGQSPSIDLEVEAKRQKQLLEAIQAGLVQSAHDVAEGGLAVAIAESAIGAKGLGATVKLAGEATAALFAESQSRFVVTVKREQQEAFEKVVEAIQVGEVTNTNEVTIHNEENEVLLTANVDEMRKAWKGAIPCLLK</sequence>
<reference key="1">
    <citation type="journal article" date="2008" name="Chem. Biol. Interact.">
        <title>Extending the Bacillus cereus group genomics to putative food-borne pathogens of different toxicity.</title>
        <authorList>
            <person name="Lapidus A."/>
            <person name="Goltsman E."/>
            <person name="Auger S."/>
            <person name="Galleron N."/>
            <person name="Segurens B."/>
            <person name="Dossat C."/>
            <person name="Land M.L."/>
            <person name="Broussolle V."/>
            <person name="Brillard J."/>
            <person name="Guinebretiere M.-H."/>
            <person name="Sanchis V."/>
            <person name="Nguen-the C."/>
            <person name="Lereclus D."/>
            <person name="Richardson P."/>
            <person name="Wincker P."/>
            <person name="Weissenbach J."/>
            <person name="Ehrlich S.D."/>
            <person name="Sorokin A."/>
        </authorList>
    </citation>
    <scope>NUCLEOTIDE SEQUENCE [LARGE SCALE GENOMIC DNA]</scope>
    <source>
        <strain>DSM 22905 / CIP 110041 / 391-98 / NVH 391-98</strain>
    </source>
</reference>
<proteinExistence type="inferred from homology"/>
<accession>A7GKH8</accession>
<name>PURL_BACCN</name>
<feature type="chain" id="PRO_1000080547" description="Phosphoribosylformylglycinamidine synthase subunit PurL">
    <location>
        <begin position="1"/>
        <end position="739"/>
    </location>
</feature>
<feature type="active site" evidence="1">
    <location>
        <position position="54"/>
    </location>
</feature>
<feature type="active site" description="Proton acceptor" evidence="1">
    <location>
        <position position="100"/>
    </location>
</feature>
<feature type="binding site" evidence="1">
    <location>
        <position position="57"/>
    </location>
    <ligand>
        <name>ATP</name>
        <dbReference type="ChEBI" id="CHEBI:30616"/>
    </ligand>
</feature>
<feature type="binding site" evidence="1">
    <location>
        <position position="96"/>
    </location>
    <ligand>
        <name>ATP</name>
        <dbReference type="ChEBI" id="CHEBI:30616"/>
    </ligand>
</feature>
<feature type="binding site" evidence="1">
    <location>
        <position position="98"/>
    </location>
    <ligand>
        <name>Mg(2+)</name>
        <dbReference type="ChEBI" id="CHEBI:18420"/>
        <label>1</label>
    </ligand>
</feature>
<feature type="binding site" evidence="1">
    <location>
        <begin position="99"/>
        <end position="102"/>
    </location>
    <ligand>
        <name>substrate</name>
    </ligand>
</feature>
<feature type="binding site" evidence="1">
    <location>
        <position position="121"/>
    </location>
    <ligand>
        <name>substrate</name>
    </ligand>
</feature>
<feature type="binding site" evidence="1">
    <location>
        <position position="122"/>
    </location>
    <ligand>
        <name>Mg(2+)</name>
        <dbReference type="ChEBI" id="CHEBI:18420"/>
        <label>2</label>
    </ligand>
</feature>
<feature type="binding site" evidence="1">
    <location>
        <position position="245"/>
    </location>
    <ligand>
        <name>substrate</name>
    </ligand>
</feature>
<feature type="binding site" evidence="1">
    <location>
        <position position="273"/>
    </location>
    <ligand>
        <name>Mg(2+)</name>
        <dbReference type="ChEBI" id="CHEBI:18420"/>
        <label>2</label>
    </ligand>
</feature>
<feature type="binding site" evidence="1">
    <location>
        <begin position="317"/>
        <end position="319"/>
    </location>
    <ligand>
        <name>substrate</name>
    </ligand>
</feature>
<feature type="binding site" evidence="1">
    <location>
        <position position="500"/>
    </location>
    <ligand>
        <name>ATP</name>
        <dbReference type="ChEBI" id="CHEBI:30616"/>
    </ligand>
</feature>
<feature type="binding site" evidence="1">
    <location>
        <position position="537"/>
    </location>
    <ligand>
        <name>ATP</name>
        <dbReference type="ChEBI" id="CHEBI:30616"/>
    </ligand>
</feature>
<feature type="binding site" evidence="1">
    <location>
        <position position="538"/>
    </location>
    <ligand>
        <name>Mg(2+)</name>
        <dbReference type="ChEBI" id="CHEBI:18420"/>
        <label>1</label>
    </ligand>
</feature>
<feature type="binding site" evidence="1">
    <location>
        <position position="540"/>
    </location>
    <ligand>
        <name>substrate</name>
    </ligand>
</feature>
<protein>
    <recommendedName>
        <fullName evidence="1">Phosphoribosylformylglycinamidine synthase subunit PurL</fullName>
        <shortName evidence="1">FGAM synthase</shortName>
        <ecNumber evidence="1">6.3.5.3</ecNumber>
    </recommendedName>
    <alternativeName>
        <fullName evidence="1">Formylglycinamide ribonucleotide amidotransferase subunit II</fullName>
        <shortName evidence="1">FGAR amidotransferase II</shortName>
        <shortName evidence="1">FGAR-AT II</shortName>
    </alternativeName>
    <alternativeName>
        <fullName evidence="1">Glutamine amidotransferase PurL</fullName>
    </alternativeName>
    <alternativeName>
        <fullName evidence="1">Phosphoribosylformylglycinamidine synthase subunit II</fullName>
    </alternativeName>
</protein>
<comment type="function">
    <text evidence="1">Part of the phosphoribosylformylglycinamidine synthase complex involved in the purines biosynthetic pathway. Catalyzes the ATP-dependent conversion of formylglycinamide ribonucleotide (FGAR) and glutamine to yield formylglycinamidine ribonucleotide (FGAM) and glutamate. The FGAM synthase complex is composed of three subunits. PurQ produces an ammonia molecule by converting glutamine to glutamate. PurL transfers the ammonia molecule to FGAR to form FGAM in an ATP-dependent manner. PurS interacts with PurQ and PurL and is thought to assist in the transfer of the ammonia molecule from PurQ to PurL.</text>
</comment>
<comment type="catalytic activity">
    <reaction evidence="1">
        <text>N(2)-formyl-N(1)-(5-phospho-beta-D-ribosyl)glycinamide + L-glutamine + ATP + H2O = 2-formamido-N(1)-(5-O-phospho-beta-D-ribosyl)acetamidine + L-glutamate + ADP + phosphate + H(+)</text>
        <dbReference type="Rhea" id="RHEA:17129"/>
        <dbReference type="ChEBI" id="CHEBI:15377"/>
        <dbReference type="ChEBI" id="CHEBI:15378"/>
        <dbReference type="ChEBI" id="CHEBI:29985"/>
        <dbReference type="ChEBI" id="CHEBI:30616"/>
        <dbReference type="ChEBI" id="CHEBI:43474"/>
        <dbReference type="ChEBI" id="CHEBI:58359"/>
        <dbReference type="ChEBI" id="CHEBI:147286"/>
        <dbReference type="ChEBI" id="CHEBI:147287"/>
        <dbReference type="ChEBI" id="CHEBI:456216"/>
        <dbReference type="EC" id="6.3.5.3"/>
    </reaction>
</comment>
<comment type="pathway">
    <text evidence="1">Purine metabolism; IMP biosynthesis via de novo pathway; 5-amino-1-(5-phospho-D-ribosyl)imidazole from N(2)-formyl-N(1)-(5-phospho-D-ribosyl)glycinamide: step 1/2.</text>
</comment>
<comment type="subunit">
    <text evidence="1">Monomer. Part of the FGAM synthase complex composed of 1 PurL, 1 PurQ and 2 PurS subunits.</text>
</comment>
<comment type="subcellular location">
    <subcellularLocation>
        <location evidence="1">Cytoplasm</location>
    </subcellularLocation>
</comment>
<comment type="similarity">
    <text evidence="1">Belongs to the FGAMS family.</text>
</comment>
<evidence type="ECO:0000255" key="1">
    <source>
        <dbReference type="HAMAP-Rule" id="MF_00420"/>
    </source>
</evidence>
<gene>
    <name evidence="1" type="primary">purL</name>
    <name type="ordered locus">Bcer98_0273</name>
</gene>